<sequence length="301" mass="33270">MNWITNYVRPKINSMLGRREMPENLWIKDPSTGEMVFHKDLESNQFVIPSSGHHMRIKAKDRLRFFFDNGEYTTLEAPKVPLDPLKFRDEKKYIDRLKDYRSRTGMDDAIVNGLGTIEGLPIVATVQDFSFMGGSLGMGAGEAIIQGFEKAIELKRPLVLFASSGGARMQEGILSLMQLPRTTVAVEMLKEAGLPYIVVLTNPTTGGVTASYAMLGDIHIAEPGALIGFAGPRVIEQTIREKLPEGFQSSEYLMEHGMVDMVVSRLELKATIARLLKIMTKQPANSDAPAPQKPDADSKAA</sequence>
<keyword id="KW-0067">ATP-binding</keyword>
<keyword id="KW-0963">Cytoplasm</keyword>
<keyword id="KW-0275">Fatty acid biosynthesis</keyword>
<keyword id="KW-0276">Fatty acid metabolism</keyword>
<keyword id="KW-0444">Lipid biosynthesis</keyword>
<keyword id="KW-0443">Lipid metabolism</keyword>
<keyword id="KW-0547">Nucleotide-binding</keyword>
<keyword id="KW-1185">Reference proteome</keyword>
<keyword id="KW-0808">Transferase</keyword>
<gene>
    <name evidence="1" type="primary">accD</name>
    <name type="ordered locus">BCAN_A2151</name>
</gene>
<evidence type="ECO:0000255" key="1">
    <source>
        <dbReference type="HAMAP-Rule" id="MF_01395"/>
    </source>
</evidence>
<evidence type="ECO:0000255" key="2">
    <source>
        <dbReference type="PROSITE-ProRule" id="PRU01136"/>
    </source>
</evidence>
<comment type="function">
    <text evidence="1">Component of the acetyl coenzyme A carboxylase (ACC) complex. Biotin carboxylase (BC) catalyzes the carboxylation of biotin on its carrier protein (BCCP) and then the CO(2) group is transferred by the transcarboxylase to acetyl-CoA to form malonyl-CoA.</text>
</comment>
<comment type="catalytic activity">
    <reaction evidence="1">
        <text>N(6)-carboxybiotinyl-L-lysyl-[protein] + acetyl-CoA = N(6)-biotinyl-L-lysyl-[protein] + malonyl-CoA</text>
        <dbReference type="Rhea" id="RHEA:54728"/>
        <dbReference type="Rhea" id="RHEA-COMP:10505"/>
        <dbReference type="Rhea" id="RHEA-COMP:10506"/>
        <dbReference type="ChEBI" id="CHEBI:57288"/>
        <dbReference type="ChEBI" id="CHEBI:57384"/>
        <dbReference type="ChEBI" id="CHEBI:83144"/>
        <dbReference type="ChEBI" id="CHEBI:83145"/>
        <dbReference type="EC" id="2.1.3.15"/>
    </reaction>
</comment>
<comment type="pathway">
    <text evidence="1">Lipid metabolism; malonyl-CoA biosynthesis; malonyl-CoA from acetyl-CoA: step 1/1.</text>
</comment>
<comment type="subunit">
    <text evidence="1">Acetyl-CoA carboxylase is a heterohexamer composed of biotin carboxyl carrier protein (AccB), biotin carboxylase (AccC) and two subunits each of ACCase subunit alpha (AccA) and ACCase subunit beta (AccD).</text>
</comment>
<comment type="subcellular location">
    <subcellularLocation>
        <location evidence="1">Cytoplasm</location>
    </subcellularLocation>
</comment>
<comment type="similarity">
    <text evidence="1">Belongs to the AccD/PCCB family.</text>
</comment>
<proteinExistence type="inferred from homology"/>
<organism>
    <name type="scientific">Brucella canis (strain ATCC 23365 / NCTC 10854 / RM-666)</name>
    <dbReference type="NCBI Taxonomy" id="483179"/>
    <lineage>
        <taxon>Bacteria</taxon>
        <taxon>Pseudomonadati</taxon>
        <taxon>Pseudomonadota</taxon>
        <taxon>Alphaproteobacteria</taxon>
        <taxon>Hyphomicrobiales</taxon>
        <taxon>Brucellaceae</taxon>
        <taxon>Brucella/Ochrobactrum group</taxon>
        <taxon>Brucella</taxon>
    </lineage>
</organism>
<name>ACCD_BRUC2</name>
<dbReference type="EC" id="2.1.3.15" evidence="1"/>
<dbReference type="EMBL" id="CP000872">
    <property type="protein sequence ID" value="ABX63134.1"/>
    <property type="molecule type" value="Genomic_DNA"/>
</dbReference>
<dbReference type="RefSeq" id="WP_002965171.1">
    <property type="nucleotide sequence ID" value="NC_010103.1"/>
</dbReference>
<dbReference type="SMR" id="A9M9T9"/>
<dbReference type="GeneID" id="55591673"/>
<dbReference type="KEGG" id="bcs:BCAN_A2151"/>
<dbReference type="HOGENOM" id="CLU_015486_1_0_5"/>
<dbReference type="PhylomeDB" id="A9M9T9"/>
<dbReference type="UniPathway" id="UPA00655">
    <property type="reaction ID" value="UER00711"/>
</dbReference>
<dbReference type="Proteomes" id="UP000001385">
    <property type="component" value="Chromosome I"/>
</dbReference>
<dbReference type="GO" id="GO:0009329">
    <property type="term" value="C:acetate CoA-transferase complex"/>
    <property type="evidence" value="ECO:0007669"/>
    <property type="project" value="TreeGrafter"/>
</dbReference>
<dbReference type="GO" id="GO:0003989">
    <property type="term" value="F:acetyl-CoA carboxylase activity"/>
    <property type="evidence" value="ECO:0007669"/>
    <property type="project" value="InterPro"/>
</dbReference>
<dbReference type="GO" id="GO:0005524">
    <property type="term" value="F:ATP binding"/>
    <property type="evidence" value="ECO:0007669"/>
    <property type="project" value="UniProtKB-KW"/>
</dbReference>
<dbReference type="GO" id="GO:0016743">
    <property type="term" value="F:carboxyl- or carbamoyltransferase activity"/>
    <property type="evidence" value="ECO:0007669"/>
    <property type="project" value="UniProtKB-UniRule"/>
</dbReference>
<dbReference type="GO" id="GO:0006633">
    <property type="term" value="P:fatty acid biosynthetic process"/>
    <property type="evidence" value="ECO:0007669"/>
    <property type="project" value="UniProtKB-KW"/>
</dbReference>
<dbReference type="GO" id="GO:2001295">
    <property type="term" value="P:malonyl-CoA biosynthetic process"/>
    <property type="evidence" value="ECO:0007669"/>
    <property type="project" value="UniProtKB-UniRule"/>
</dbReference>
<dbReference type="Gene3D" id="3.90.226.10">
    <property type="entry name" value="2-enoyl-CoA Hydratase, Chain A, domain 1"/>
    <property type="match status" value="1"/>
</dbReference>
<dbReference type="HAMAP" id="MF_01395">
    <property type="entry name" value="AcetylCoA_CT_beta"/>
    <property type="match status" value="1"/>
</dbReference>
<dbReference type="InterPro" id="IPR034733">
    <property type="entry name" value="AcCoA_carboxyl_beta"/>
</dbReference>
<dbReference type="InterPro" id="IPR000438">
    <property type="entry name" value="Acetyl_CoA_COase_Trfase_b_su"/>
</dbReference>
<dbReference type="InterPro" id="IPR029045">
    <property type="entry name" value="ClpP/crotonase-like_dom_sf"/>
</dbReference>
<dbReference type="InterPro" id="IPR011762">
    <property type="entry name" value="COA_CT_N"/>
</dbReference>
<dbReference type="NCBIfam" id="TIGR00515">
    <property type="entry name" value="accD"/>
    <property type="match status" value="1"/>
</dbReference>
<dbReference type="PANTHER" id="PTHR42995">
    <property type="entry name" value="ACETYL-COENZYME A CARBOXYLASE CARBOXYL TRANSFERASE SUBUNIT BETA, CHLOROPLASTIC"/>
    <property type="match status" value="1"/>
</dbReference>
<dbReference type="PANTHER" id="PTHR42995:SF5">
    <property type="entry name" value="ACETYL-COENZYME A CARBOXYLASE CARBOXYL TRANSFERASE SUBUNIT BETA, CHLOROPLASTIC"/>
    <property type="match status" value="1"/>
</dbReference>
<dbReference type="Pfam" id="PF01039">
    <property type="entry name" value="Carboxyl_trans"/>
    <property type="match status" value="1"/>
</dbReference>
<dbReference type="PRINTS" id="PR01070">
    <property type="entry name" value="ACCCTRFRASEB"/>
</dbReference>
<dbReference type="SUPFAM" id="SSF52096">
    <property type="entry name" value="ClpP/crotonase"/>
    <property type="match status" value="1"/>
</dbReference>
<dbReference type="PROSITE" id="PS50980">
    <property type="entry name" value="COA_CT_NTER"/>
    <property type="match status" value="1"/>
</dbReference>
<reference key="1">
    <citation type="submission" date="2007-10" db="EMBL/GenBank/DDBJ databases">
        <title>Brucella canis ATCC 23365 whole genome shotgun sequencing project.</title>
        <authorList>
            <person name="Setubal J.C."/>
            <person name="Bowns C."/>
            <person name="Boyle S."/>
            <person name="Crasta O.R."/>
            <person name="Czar M.J."/>
            <person name="Dharmanolla C."/>
            <person name="Gillespie J.J."/>
            <person name="Kenyon R.W."/>
            <person name="Lu J."/>
            <person name="Mane S."/>
            <person name="Mohapatra S."/>
            <person name="Nagrani S."/>
            <person name="Purkayastha A."/>
            <person name="Rajasimha H.K."/>
            <person name="Shallom J.M."/>
            <person name="Shallom S."/>
            <person name="Shukla M."/>
            <person name="Snyder E.E."/>
            <person name="Sobral B.W."/>
            <person name="Wattam A.R."/>
            <person name="Will R."/>
            <person name="Williams K."/>
            <person name="Yoo H."/>
            <person name="Bruce D."/>
            <person name="Detter C."/>
            <person name="Munk C."/>
            <person name="Brettin T.S."/>
        </authorList>
    </citation>
    <scope>NUCLEOTIDE SEQUENCE [LARGE SCALE GENOMIC DNA]</scope>
    <source>
        <strain>ATCC 23365 / NCTC 10854 / RM-666</strain>
    </source>
</reference>
<accession>A9M9T9</accession>
<protein>
    <recommendedName>
        <fullName evidence="1">Acetyl-coenzyme A carboxylase carboxyl transferase subunit beta</fullName>
        <shortName evidence="1">ACCase subunit beta</shortName>
        <shortName evidence="1">Acetyl-CoA carboxylase carboxyltransferase subunit beta</shortName>
        <ecNumber evidence="1">2.1.3.15</ecNumber>
    </recommendedName>
</protein>
<feature type="chain" id="PRO_0000389703" description="Acetyl-coenzyme A carboxylase carboxyl transferase subunit beta">
    <location>
        <begin position="1"/>
        <end position="301"/>
    </location>
</feature>
<feature type="domain" description="CoA carboxyltransferase N-terminal" evidence="2">
    <location>
        <begin position="25"/>
        <end position="294"/>
    </location>
</feature>